<gene>
    <name evidence="1" type="primary">metG</name>
    <name type="ordered locus">Neut_1921</name>
</gene>
<protein>
    <recommendedName>
        <fullName evidence="1">Methionine--tRNA ligase</fullName>
        <ecNumber evidence="1">6.1.1.10</ecNumber>
    </recommendedName>
    <alternativeName>
        <fullName evidence="1">Methionyl-tRNA synthetase</fullName>
        <shortName evidence="1">MetRS</shortName>
    </alternativeName>
</protein>
<evidence type="ECO:0000255" key="1">
    <source>
        <dbReference type="HAMAP-Rule" id="MF_00098"/>
    </source>
</evidence>
<name>SYM_NITEC</name>
<organism>
    <name type="scientific">Nitrosomonas eutropha (strain DSM 101675 / C91 / Nm57)</name>
    <dbReference type="NCBI Taxonomy" id="335283"/>
    <lineage>
        <taxon>Bacteria</taxon>
        <taxon>Pseudomonadati</taxon>
        <taxon>Pseudomonadota</taxon>
        <taxon>Betaproteobacteria</taxon>
        <taxon>Nitrosomonadales</taxon>
        <taxon>Nitrosomonadaceae</taxon>
        <taxon>Nitrosomonas</taxon>
    </lineage>
</organism>
<sequence>MTVRNILVTSALPYANGSIHLGHLVEYIQTDIWVRFQKMQGHTVYYVCADDAHGTPIMLRAEREGISPEALIARVYTEHLRDFTGFHIAFDQYYSTHSDETRYYAEDIYQKLKAAGLIAIRSIEQLYDPVKNLFLPDRFVKGECPKCGAVDQYGDSCEACGAAYTPTELKNPYSAISGATPIRKASEHFFFKLSDPRCSDFLRKWTRSGNHLQVEAANKMAEWLGEEGENKLSDWDISRDAPYFGFEIPGETDKYFYVWLDAPIGYMGSFKKLCTEQGIDFDQYWKKGATTELYHFIGKDILYFHALFWPAMLENAGYRTPTQIFAHGFLTVNGEKMSKSRGTFITAESYLQQRLNPEWLRYYYAAKLNGSMEDIDLNLEDFVTRVNADLVGKYINIASRCAGFISKCFDGKLVAGEDYQLLQQTVDEYFSSWQPGVIEAAYEARDFSAAIRHIMKRTDEVNELIHVLAPWEIAKDETRERELHRACSLGIQMFYLLSCYLKPVLPYTAERIEHFLNWMALGWPRQQAGQPLSTMLLPAGHTINTYQHLITRIDPKQIAALTEANRQTMTTSNDTHSLTRHAEAQQRVIAPIAETISIEDFSKIDLRIARILDAQHVPGADKLLQLTLDIGSEQRSVFAGIKSAYDPEQLKGRLTVMVANLAPRKMKFGLSEGMVLAASGESGGPFLLAPDSGAQPGMRVK</sequence>
<feature type="chain" id="PRO_0000331856" description="Methionine--tRNA ligase">
    <location>
        <begin position="1"/>
        <end position="701"/>
    </location>
</feature>
<feature type="domain" description="tRNA-binding" evidence="1">
    <location>
        <begin position="600"/>
        <end position="701"/>
    </location>
</feature>
<feature type="short sequence motif" description="'HIGH' region">
    <location>
        <begin position="13"/>
        <end position="23"/>
    </location>
</feature>
<feature type="short sequence motif" description="'KMSKS' region">
    <location>
        <begin position="336"/>
        <end position="340"/>
    </location>
</feature>
<feature type="binding site" evidence="1">
    <location>
        <position position="144"/>
    </location>
    <ligand>
        <name>Zn(2+)</name>
        <dbReference type="ChEBI" id="CHEBI:29105"/>
    </ligand>
</feature>
<feature type="binding site" evidence="1">
    <location>
        <position position="147"/>
    </location>
    <ligand>
        <name>Zn(2+)</name>
        <dbReference type="ChEBI" id="CHEBI:29105"/>
    </ligand>
</feature>
<feature type="binding site" evidence="1">
    <location>
        <position position="157"/>
    </location>
    <ligand>
        <name>Zn(2+)</name>
        <dbReference type="ChEBI" id="CHEBI:29105"/>
    </ligand>
</feature>
<feature type="binding site" evidence="1">
    <location>
        <position position="160"/>
    </location>
    <ligand>
        <name>Zn(2+)</name>
        <dbReference type="ChEBI" id="CHEBI:29105"/>
    </ligand>
</feature>
<feature type="binding site" evidence="1">
    <location>
        <position position="339"/>
    </location>
    <ligand>
        <name>ATP</name>
        <dbReference type="ChEBI" id="CHEBI:30616"/>
    </ligand>
</feature>
<reference key="1">
    <citation type="journal article" date="2007" name="Environ. Microbiol.">
        <title>Whole-genome analysis of the ammonia-oxidizing bacterium, Nitrosomonas eutropha C91: implications for niche adaptation.</title>
        <authorList>
            <person name="Stein L.Y."/>
            <person name="Arp D.J."/>
            <person name="Berube P.M."/>
            <person name="Chain P.S."/>
            <person name="Hauser L."/>
            <person name="Jetten M.S."/>
            <person name="Klotz M.G."/>
            <person name="Larimer F.W."/>
            <person name="Norton J.M."/>
            <person name="Op den Camp H.J.M."/>
            <person name="Shin M."/>
            <person name="Wei X."/>
        </authorList>
    </citation>
    <scope>NUCLEOTIDE SEQUENCE [LARGE SCALE GENOMIC DNA]</scope>
    <source>
        <strain>DSM 101675 / C91 / Nm57</strain>
    </source>
</reference>
<proteinExistence type="inferred from homology"/>
<comment type="function">
    <text evidence="1">Is required not only for elongation of protein synthesis but also for the initiation of all mRNA translation through initiator tRNA(fMet) aminoacylation.</text>
</comment>
<comment type="catalytic activity">
    <reaction evidence="1">
        <text>tRNA(Met) + L-methionine + ATP = L-methionyl-tRNA(Met) + AMP + diphosphate</text>
        <dbReference type="Rhea" id="RHEA:13481"/>
        <dbReference type="Rhea" id="RHEA-COMP:9667"/>
        <dbReference type="Rhea" id="RHEA-COMP:9698"/>
        <dbReference type="ChEBI" id="CHEBI:30616"/>
        <dbReference type="ChEBI" id="CHEBI:33019"/>
        <dbReference type="ChEBI" id="CHEBI:57844"/>
        <dbReference type="ChEBI" id="CHEBI:78442"/>
        <dbReference type="ChEBI" id="CHEBI:78530"/>
        <dbReference type="ChEBI" id="CHEBI:456215"/>
        <dbReference type="EC" id="6.1.1.10"/>
    </reaction>
</comment>
<comment type="cofactor">
    <cofactor evidence="1">
        <name>Zn(2+)</name>
        <dbReference type="ChEBI" id="CHEBI:29105"/>
    </cofactor>
    <text evidence="1">Binds 1 zinc ion per subunit.</text>
</comment>
<comment type="subunit">
    <text evidence="1">Homodimer.</text>
</comment>
<comment type="subcellular location">
    <subcellularLocation>
        <location evidence="1">Cytoplasm</location>
    </subcellularLocation>
</comment>
<comment type="similarity">
    <text evidence="1">Belongs to the class-I aminoacyl-tRNA synthetase family. MetG type 1 subfamily.</text>
</comment>
<dbReference type="EC" id="6.1.1.10" evidence="1"/>
<dbReference type="EMBL" id="CP000450">
    <property type="protein sequence ID" value="ABI60153.1"/>
    <property type="molecule type" value="Genomic_DNA"/>
</dbReference>
<dbReference type="RefSeq" id="WP_011634955.1">
    <property type="nucleotide sequence ID" value="NC_008344.1"/>
</dbReference>
<dbReference type="SMR" id="Q0AES9"/>
<dbReference type="STRING" id="335283.Neut_1921"/>
<dbReference type="KEGG" id="net:Neut_1921"/>
<dbReference type="eggNOG" id="COG0073">
    <property type="taxonomic scope" value="Bacteria"/>
</dbReference>
<dbReference type="eggNOG" id="COG0143">
    <property type="taxonomic scope" value="Bacteria"/>
</dbReference>
<dbReference type="HOGENOM" id="CLU_009710_7_0_4"/>
<dbReference type="OrthoDB" id="9810191at2"/>
<dbReference type="Proteomes" id="UP000001966">
    <property type="component" value="Chromosome"/>
</dbReference>
<dbReference type="GO" id="GO:0005829">
    <property type="term" value="C:cytosol"/>
    <property type="evidence" value="ECO:0007669"/>
    <property type="project" value="TreeGrafter"/>
</dbReference>
<dbReference type="GO" id="GO:0005524">
    <property type="term" value="F:ATP binding"/>
    <property type="evidence" value="ECO:0007669"/>
    <property type="project" value="UniProtKB-UniRule"/>
</dbReference>
<dbReference type="GO" id="GO:0046872">
    <property type="term" value="F:metal ion binding"/>
    <property type="evidence" value="ECO:0007669"/>
    <property type="project" value="UniProtKB-KW"/>
</dbReference>
<dbReference type="GO" id="GO:0004825">
    <property type="term" value="F:methionine-tRNA ligase activity"/>
    <property type="evidence" value="ECO:0007669"/>
    <property type="project" value="UniProtKB-UniRule"/>
</dbReference>
<dbReference type="GO" id="GO:0000049">
    <property type="term" value="F:tRNA binding"/>
    <property type="evidence" value="ECO:0007669"/>
    <property type="project" value="UniProtKB-KW"/>
</dbReference>
<dbReference type="GO" id="GO:0006431">
    <property type="term" value="P:methionyl-tRNA aminoacylation"/>
    <property type="evidence" value="ECO:0007669"/>
    <property type="project" value="UniProtKB-UniRule"/>
</dbReference>
<dbReference type="CDD" id="cd07957">
    <property type="entry name" value="Anticodon_Ia_Met"/>
    <property type="match status" value="1"/>
</dbReference>
<dbReference type="CDD" id="cd00814">
    <property type="entry name" value="MetRS_core"/>
    <property type="match status" value="1"/>
</dbReference>
<dbReference type="CDD" id="cd02800">
    <property type="entry name" value="tRNA_bind_EcMetRS_like"/>
    <property type="match status" value="1"/>
</dbReference>
<dbReference type="FunFam" id="2.20.28.20:FF:000001">
    <property type="entry name" value="Methionine--tRNA ligase"/>
    <property type="match status" value="1"/>
</dbReference>
<dbReference type="FunFam" id="2.40.50.140:FF:000042">
    <property type="entry name" value="Methionine--tRNA ligase"/>
    <property type="match status" value="1"/>
</dbReference>
<dbReference type="Gene3D" id="3.40.50.620">
    <property type="entry name" value="HUPs"/>
    <property type="match status" value="1"/>
</dbReference>
<dbReference type="Gene3D" id="1.10.730.10">
    <property type="entry name" value="Isoleucyl-tRNA Synthetase, Domain 1"/>
    <property type="match status" value="1"/>
</dbReference>
<dbReference type="Gene3D" id="2.20.28.20">
    <property type="entry name" value="Methionyl-tRNA synthetase, Zn-domain"/>
    <property type="match status" value="1"/>
</dbReference>
<dbReference type="Gene3D" id="2.40.50.140">
    <property type="entry name" value="Nucleic acid-binding proteins"/>
    <property type="match status" value="1"/>
</dbReference>
<dbReference type="HAMAP" id="MF_00098">
    <property type="entry name" value="Met_tRNA_synth_type1"/>
    <property type="match status" value="1"/>
</dbReference>
<dbReference type="InterPro" id="IPR001412">
    <property type="entry name" value="aa-tRNA-synth_I_CS"/>
</dbReference>
<dbReference type="InterPro" id="IPR041872">
    <property type="entry name" value="Anticodon_Met"/>
</dbReference>
<dbReference type="InterPro" id="IPR004495">
    <property type="entry name" value="Met-tRNA-synth_bsu_C"/>
</dbReference>
<dbReference type="InterPro" id="IPR023458">
    <property type="entry name" value="Met-tRNA_ligase_1"/>
</dbReference>
<dbReference type="InterPro" id="IPR014758">
    <property type="entry name" value="Met-tRNA_synth"/>
</dbReference>
<dbReference type="InterPro" id="IPR015413">
    <property type="entry name" value="Methionyl/Leucyl_tRNA_Synth"/>
</dbReference>
<dbReference type="InterPro" id="IPR033911">
    <property type="entry name" value="MetRS_core"/>
</dbReference>
<dbReference type="InterPro" id="IPR029038">
    <property type="entry name" value="MetRS_Zn"/>
</dbReference>
<dbReference type="InterPro" id="IPR012340">
    <property type="entry name" value="NA-bd_OB-fold"/>
</dbReference>
<dbReference type="InterPro" id="IPR014729">
    <property type="entry name" value="Rossmann-like_a/b/a_fold"/>
</dbReference>
<dbReference type="InterPro" id="IPR002547">
    <property type="entry name" value="tRNA-bd_dom"/>
</dbReference>
<dbReference type="InterPro" id="IPR009080">
    <property type="entry name" value="tRNAsynth_Ia_anticodon-bd"/>
</dbReference>
<dbReference type="NCBIfam" id="TIGR00398">
    <property type="entry name" value="metG"/>
    <property type="match status" value="1"/>
</dbReference>
<dbReference type="NCBIfam" id="TIGR00399">
    <property type="entry name" value="metG_C_term"/>
    <property type="match status" value="1"/>
</dbReference>
<dbReference type="NCBIfam" id="NF001100">
    <property type="entry name" value="PRK00133.1"/>
    <property type="match status" value="1"/>
</dbReference>
<dbReference type="PANTHER" id="PTHR45765">
    <property type="entry name" value="METHIONINE--TRNA LIGASE"/>
    <property type="match status" value="1"/>
</dbReference>
<dbReference type="PANTHER" id="PTHR45765:SF1">
    <property type="entry name" value="METHIONINE--TRNA LIGASE, CYTOPLASMIC"/>
    <property type="match status" value="1"/>
</dbReference>
<dbReference type="Pfam" id="PF19303">
    <property type="entry name" value="Anticodon_3"/>
    <property type="match status" value="1"/>
</dbReference>
<dbReference type="Pfam" id="PF09334">
    <property type="entry name" value="tRNA-synt_1g"/>
    <property type="match status" value="1"/>
</dbReference>
<dbReference type="Pfam" id="PF01588">
    <property type="entry name" value="tRNA_bind"/>
    <property type="match status" value="1"/>
</dbReference>
<dbReference type="PRINTS" id="PR01041">
    <property type="entry name" value="TRNASYNTHMET"/>
</dbReference>
<dbReference type="SUPFAM" id="SSF47323">
    <property type="entry name" value="Anticodon-binding domain of a subclass of class I aminoacyl-tRNA synthetases"/>
    <property type="match status" value="1"/>
</dbReference>
<dbReference type="SUPFAM" id="SSF57770">
    <property type="entry name" value="Methionyl-tRNA synthetase (MetRS), Zn-domain"/>
    <property type="match status" value="1"/>
</dbReference>
<dbReference type="SUPFAM" id="SSF50249">
    <property type="entry name" value="Nucleic acid-binding proteins"/>
    <property type="match status" value="1"/>
</dbReference>
<dbReference type="SUPFAM" id="SSF52374">
    <property type="entry name" value="Nucleotidylyl transferase"/>
    <property type="match status" value="1"/>
</dbReference>
<dbReference type="PROSITE" id="PS00178">
    <property type="entry name" value="AA_TRNA_LIGASE_I"/>
    <property type="match status" value="1"/>
</dbReference>
<dbReference type="PROSITE" id="PS50886">
    <property type="entry name" value="TRBD"/>
    <property type="match status" value="1"/>
</dbReference>
<accession>Q0AES9</accession>
<keyword id="KW-0030">Aminoacyl-tRNA synthetase</keyword>
<keyword id="KW-0067">ATP-binding</keyword>
<keyword id="KW-0963">Cytoplasm</keyword>
<keyword id="KW-0436">Ligase</keyword>
<keyword id="KW-0479">Metal-binding</keyword>
<keyword id="KW-0547">Nucleotide-binding</keyword>
<keyword id="KW-0648">Protein biosynthesis</keyword>
<keyword id="KW-0694">RNA-binding</keyword>
<keyword id="KW-0820">tRNA-binding</keyword>
<keyword id="KW-0862">Zinc</keyword>